<gene>
    <name type="primary">Gtf2h1</name>
</gene>
<reference key="1">
    <citation type="journal article" date="1998" name="Gene">
        <title>Genomic organization and promoter characterization of the mouse and human genes encoding p62 subunit of the transcription/DNA repair factor TFIIH.</title>
        <authorList>
            <person name="Perez C."/>
            <person name="Auriol J."/>
            <person name="Seroz T."/>
            <person name="Egly J.-M."/>
        </authorList>
    </citation>
    <scope>NUCLEOTIDE SEQUENCE [MRNA]</scope>
    <source>
        <tissue>Teratocarcinoma</tissue>
    </source>
</reference>
<reference key="2">
    <citation type="journal article" date="2005" name="Science">
        <title>The transcriptional landscape of the mammalian genome.</title>
        <authorList>
            <person name="Carninci P."/>
            <person name="Kasukawa T."/>
            <person name="Katayama S."/>
            <person name="Gough J."/>
            <person name="Frith M.C."/>
            <person name="Maeda N."/>
            <person name="Oyama R."/>
            <person name="Ravasi T."/>
            <person name="Lenhard B."/>
            <person name="Wells C."/>
            <person name="Kodzius R."/>
            <person name="Shimokawa K."/>
            <person name="Bajic V.B."/>
            <person name="Brenner S.E."/>
            <person name="Batalov S."/>
            <person name="Forrest A.R."/>
            <person name="Zavolan M."/>
            <person name="Davis M.J."/>
            <person name="Wilming L.G."/>
            <person name="Aidinis V."/>
            <person name="Allen J.E."/>
            <person name="Ambesi-Impiombato A."/>
            <person name="Apweiler R."/>
            <person name="Aturaliya R.N."/>
            <person name="Bailey T.L."/>
            <person name="Bansal M."/>
            <person name="Baxter L."/>
            <person name="Beisel K.W."/>
            <person name="Bersano T."/>
            <person name="Bono H."/>
            <person name="Chalk A.M."/>
            <person name="Chiu K.P."/>
            <person name="Choudhary V."/>
            <person name="Christoffels A."/>
            <person name="Clutterbuck D.R."/>
            <person name="Crowe M.L."/>
            <person name="Dalla E."/>
            <person name="Dalrymple B.P."/>
            <person name="de Bono B."/>
            <person name="Della Gatta G."/>
            <person name="di Bernardo D."/>
            <person name="Down T."/>
            <person name="Engstrom P."/>
            <person name="Fagiolini M."/>
            <person name="Faulkner G."/>
            <person name="Fletcher C.F."/>
            <person name="Fukushima T."/>
            <person name="Furuno M."/>
            <person name="Futaki S."/>
            <person name="Gariboldi M."/>
            <person name="Georgii-Hemming P."/>
            <person name="Gingeras T.R."/>
            <person name="Gojobori T."/>
            <person name="Green R.E."/>
            <person name="Gustincich S."/>
            <person name="Harbers M."/>
            <person name="Hayashi Y."/>
            <person name="Hensch T.K."/>
            <person name="Hirokawa N."/>
            <person name="Hill D."/>
            <person name="Huminiecki L."/>
            <person name="Iacono M."/>
            <person name="Ikeo K."/>
            <person name="Iwama A."/>
            <person name="Ishikawa T."/>
            <person name="Jakt M."/>
            <person name="Kanapin A."/>
            <person name="Katoh M."/>
            <person name="Kawasawa Y."/>
            <person name="Kelso J."/>
            <person name="Kitamura H."/>
            <person name="Kitano H."/>
            <person name="Kollias G."/>
            <person name="Krishnan S.P."/>
            <person name="Kruger A."/>
            <person name="Kummerfeld S.K."/>
            <person name="Kurochkin I.V."/>
            <person name="Lareau L.F."/>
            <person name="Lazarevic D."/>
            <person name="Lipovich L."/>
            <person name="Liu J."/>
            <person name="Liuni S."/>
            <person name="McWilliam S."/>
            <person name="Madan Babu M."/>
            <person name="Madera M."/>
            <person name="Marchionni L."/>
            <person name="Matsuda H."/>
            <person name="Matsuzawa S."/>
            <person name="Miki H."/>
            <person name="Mignone F."/>
            <person name="Miyake S."/>
            <person name="Morris K."/>
            <person name="Mottagui-Tabar S."/>
            <person name="Mulder N."/>
            <person name="Nakano N."/>
            <person name="Nakauchi H."/>
            <person name="Ng P."/>
            <person name="Nilsson R."/>
            <person name="Nishiguchi S."/>
            <person name="Nishikawa S."/>
            <person name="Nori F."/>
            <person name="Ohara O."/>
            <person name="Okazaki Y."/>
            <person name="Orlando V."/>
            <person name="Pang K.C."/>
            <person name="Pavan W.J."/>
            <person name="Pavesi G."/>
            <person name="Pesole G."/>
            <person name="Petrovsky N."/>
            <person name="Piazza S."/>
            <person name="Reed J."/>
            <person name="Reid J.F."/>
            <person name="Ring B.Z."/>
            <person name="Ringwald M."/>
            <person name="Rost B."/>
            <person name="Ruan Y."/>
            <person name="Salzberg S.L."/>
            <person name="Sandelin A."/>
            <person name="Schneider C."/>
            <person name="Schoenbach C."/>
            <person name="Sekiguchi K."/>
            <person name="Semple C.A."/>
            <person name="Seno S."/>
            <person name="Sessa L."/>
            <person name="Sheng Y."/>
            <person name="Shibata Y."/>
            <person name="Shimada H."/>
            <person name="Shimada K."/>
            <person name="Silva D."/>
            <person name="Sinclair B."/>
            <person name="Sperling S."/>
            <person name="Stupka E."/>
            <person name="Sugiura K."/>
            <person name="Sultana R."/>
            <person name="Takenaka Y."/>
            <person name="Taki K."/>
            <person name="Tammoja K."/>
            <person name="Tan S.L."/>
            <person name="Tang S."/>
            <person name="Taylor M.S."/>
            <person name="Tegner J."/>
            <person name="Teichmann S.A."/>
            <person name="Ueda H.R."/>
            <person name="van Nimwegen E."/>
            <person name="Verardo R."/>
            <person name="Wei C.L."/>
            <person name="Yagi K."/>
            <person name="Yamanishi H."/>
            <person name="Zabarovsky E."/>
            <person name="Zhu S."/>
            <person name="Zimmer A."/>
            <person name="Hide W."/>
            <person name="Bult C."/>
            <person name="Grimmond S.M."/>
            <person name="Teasdale R.D."/>
            <person name="Liu E.T."/>
            <person name="Brusic V."/>
            <person name="Quackenbush J."/>
            <person name="Wahlestedt C."/>
            <person name="Mattick J.S."/>
            <person name="Hume D.A."/>
            <person name="Kai C."/>
            <person name="Sasaki D."/>
            <person name="Tomaru Y."/>
            <person name="Fukuda S."/>
            <person name="Kanamori-Katayama M."/>
            <person name="Suzuki M."/>
            <person name="Aoki J."/>
            <person name="Arakawa T."/>
            <person name="Iida J."/>
            <person name="Imamura K."/>
            <person name="Itoh M."/>
            <person name="Kato T."/>
            <person name="Kawaji H."/>
            <person name="Kawagashira N."/>
            <person name="Kawashima T."/>
            <person name="Kojima M."/>
            <person name="Kondo S."/>
            <person name="Konno H."/>
            <person name="Nakano K."/>
            <person name="Ninomiya N."/>
            <person name="Nishio T."/>
            <person name="Okada M."/>
            <person name="Plessy C."/>
            <person name="Shibata K."/>
            <person name="Shiraki T."/>
            <person name="Suzuki S."/>
            <person name="Tagami M."/>
            <person name="Waki K."/>
            <person name="Watahiki A."/>
            <person name="Okamura-Oho Y."/>
            <person name="Suzuki H."/>
            <person name="Kawai J."/>
            <person name="Hayashizaki Y."/>
        </authorList>
    </citation>
    <scope>NUCLEOTIDE SEQUENCE [LARGE SCALE MRNA]</scope>
    <source>
        <strain>C57BL/6J</strain>
        <tissue>Liver</tissue>
    </source>
</reference>
<reference key="3">
    <citation type="journal article" date="2010" name="Cell">
        <title>A tissue-specific atlas of mouse protein phosphorylation and expression.</title>
        <authorList>
            <person name="Huttlin E.L."/>
            <person name="Jedrychowski M.P."/>
            <person name="Elias J.E."/>
            <person name="Goswami T."/>
            <person name="Rad R."/>
            <person name="Beausoleil S.A."/>
            <person name="Villen J."/>
            <person name="Haas W."/>
            <person name="Sowa M.E."/>
            <person name="Gygi S.P."/>
        </authorList>
    </citation>
    <scope>IDENTIFICATION BY MASS SPECTROMETRY [LARGE SCALE ANALYSIS]</scope>
    <source>
        <tissue>Testis</tissue>
    </source>
</reference>
<reference key="4">
    <citation type="journal article" date="2013" name="Mol. Cell">
        <title>SIRT5-mediated lysine desuccinylation impacts diverse metabolic pathways.</title>
        <authorList>
            <person name="Park J."/>
            <person name="Chen Y."/>
            <person name="Tishkoff D.X."/>
            <person name="Peng C."/>
            <person name="Tan M."/>
            <person name="Dai L."/>
            <person name="Xie Z."/>
            <person name="Zhang Y."/>
            <person name="Zwaans B.M."/>
            <person name="Skinner M.E."/>
            <person name="Lombard D.B."/>
            <person name="Zhao Y."/>
        </authorList>
    </citation>
    <scope>ACETYLATION [LARGE SCALE ANALYSIS] AT LYS-239</scope>
    <scope>IDENTIFICATION BY MASS SPECTROMETRY [LARGE SCALE ANALYSIS]</scope>
    <source>
        <tissue>Embryonic fibroblast</tissue>
    </source>
</reference>
<comment type="function">
    <text evidence="1">Component of the general transcription and DNA repair factor IIH (TFIIH) core complex, which is involved in general and transcription-coupled nucleotide excision repair (NER) of damaged DNA and, when complexed to CAK, in RNA transcription by RNA polymerase II. In NER, TFIIH acts by opening DNA around the lesion to allow the excision of the damaged oligonucleotide and its replacement by a new DNA fragment. In transcription, TFIIH has an essential role in transcription initiation. When the pre-initiation complex (PIC) has been established, TFIIH is required for promoter opening and promoter escape. Phosphorylation of the C-terminal tail (CTD) of the largest subunit of RNA polymerase II by the kinase module CAK controls the initiation of transcription.</text>
</comment>
<comment type="subunit">
    <text evidence="1">Component of the 7-subunit TFIIH core complex composed of XPB/ERCC3, XPD/ERCC2, GTF2H1, GTF2H2, GTF2H3, GTF2H4 and GTF2H5, which is active in NER. The core complex associates with the 3-subunit CDK-activating kinase (CAK) module composed of CCNH/cyclin H, CDK7 and MNAT1 to form the 10-subunit holoenzyme (holo-TFIIH) active in transcription. Interacts with PUF60.</text>
</comment>
<comment type="subcellular location">
    <subcellularLocation>
        <location>Nucleus</location>
    </subcellularLocation>
</comment>
<comment type="similarity">
    <text evidence="4">Belongs to the TFB1 family.</text>
</comment>
<sequence length="547" mass="61851">MATSSEEVLLIVKKVRQKKQDGALYLMAERIAWAPEGKDRFTISHMYADIKCQKISPEGKAKIQLQLVLHAGDTTNFHFSNESTAVKERDAVKDLLQQLLPKFKRKANKELEEKNRMLQEDPVLFQLYKDLVVSQVISAEEFWANRLNVNATDSSTSSHKQDVGISAAFLADVRPQTDGCNGLRYNLTSDIIESIFRTYPAVKMKYAETVPHNMTEKEFWTRFFQSHYFHRDRLNTGSKDLFAECAKIDEKGLKTMVSLGVKNPMLDLTSLEDKPLDEGYSISSVPSTSNSKSIKENSNAAIIKRFNHHSAMVLAAGLRKQQAQNGQNGEPSSVDGNSGDTDCFQPAVKRAKLQESIEYEDLGNNNSVKTIALNLKKSDRYYHGPTPIQSLQYATSQDIINSFQSIRQEMEAYTPKLTQVLSSSAASSTITALSPGGALMQGGTQQAVNQMVPNDIQSELKHLYVAVGELLRHFWSCFPVNTPFLEEKVVKMKSNLERFQVTKLCPFQEKIRRQYLSTNLVSHIEEMLQTAYNKLHTWQSRRLMKKT</sequence>
<evidence type="ECO:0000250" key="1">
    <source>
        <dbReference type="UniProtKB" id="P32780"/>
    </source>
</evidence>
<evidence type="ECO:0000255" key="2">
    <source>
        <dbReference type="PROSITE-ProRule" id="PRU00036"/>
    </source>
</evidence>
<evidence type="ECO:0000256" key="3">
    <source>
        <dbReference type="SAM" id="MobiDB-lite"/>
    </source>
</evidence>
<evidence type="ECO:0000305" key="4"/>
<evidence type="ECO:0007744" key="5">
    <source>
    </source>
</evidence>
<feature type="chain" id="PRO_0000119246" description="General transcription factor IIH subunit 1">
    <location>
        <begin position="1"/>
        <end position="547"/>
    </location>
</feature>
<feature type="domain" description="BSD 1" evidence="2">
    <location>
        <begin position="99"/>
        <end position="154"/>
    </location>
</feature>
<feature type="domain" description="BSD 2" evidence="2">
    <location>
        <begin position="179"/>
        <end position="231"/>
    </location>
</feature>
<feature type="region of interest" description="Disordered" evidence="3">
    <location>
        <begin position="319"/>
        <end position="342"/>
    </location>
</feature>
<feature type="compositionally biased region" description="Polar residues" evidence="3">
    <location>
        <begin position="321"/>
        <end position="340"/>
    </location>
</feature>
<feature type="modified residue" description="N6-acetyllysine" evidence="5">
    <location>
        <position position="239"/>
    </location>
</feature>
<feature type="modified residue" description="Phosphoserine" evidence="1">
    <location>
        <position position="338"/>
    </location>
</feature>
<feature type="modified residue" description="Phosphoserine" evidence="1">
    <location>
        <position position="356"/>
    </location>
</feature>
<feature type="sequence conflict" description="In Ref. 2; BAB23789." evidence="4" ref="2">
    <original>I</original>
    <variation>F</variation>
    <location>
        <position position="137"/>
    </location>
</feature>
<feature type="sequence conflict" description="In Ref. 2; BAB23789." evidence="4" ref="2">
    <original>E</original>
    <variation>G</variation>
    <location>
        <position position="208"/>
    </location>
</feature>
<feature type="sequence conflict" description="In Ref. 2; BAB23789." evidence="4" ref="2">
    <original>S</original>
    <variation>G</variation>
    <location>
        <position position="281"/>
    </location>
</feature>
<feature type="sequence conflict" description="In Ref. 2; BAB23789." evidence="4" ref="2">
    <original>T</original>
    <variation>A</variation>
    <location>
        <position position="537"/>
    </location>
</feature>
<protein>
    <recommendedName>
        <fullName>General transcription factor IIH subunit 1</fullName>
    </recommendedName>
    <alternativeName>
        <fullName>Basic transcription factor 2 62 kDa subunit</fullName>
        <shortName>BTF2 p62</shortName>
    </alternativeName>
    <alternativeName>
        <fullName>General transcription factor IIH polypeptide 1</fullName>
    </alternativeName>
    <alternativeName>
        <fullName>TFIIH basal transcription factor complex p62 subunit</fullName>
    </alternativeName>
</protein>
<proteinExistence type="evidence at protein level"/>
<dbReference type="EMBL" id="AJ002366">
    <property type="protein sequence ID" value="CAA05340.1"/>
    <property type="molecule type" value="mRNA"/>
</dbReference>
<dbReference type="EMBL" id="AK005065">
    <property type="protein sequence ID" value="BAB23789.1"/>
    <property type="molecule type" value="mRNA"/>
</dbReference>
<dbReference type="CCDS" id="CCDS21287.1"/>
<dbReference type="RefSeq" id="NP_001278004.1">
    <property type="nucleotide sequence ID" value="NM_001291075.1"/>
</dbReference>
<dbReference type="RefSeq" id="NP_032212.3">
    <property type="nucleotide sequence ID" value="NM_008186.4"/>
</dbReference>
<dbReference type="BMRB" id="Q9DBA9"/>
<dbReference type="SMR" id="Q9DBA9"/>
<dbReference type="BioGRID" id="200111">
    <property type="interactions" value="4"/>
</dbReference>
<dbReference type="FunCoup" id="Q9DBA9">
    <property type="interactions" value="4389"/>
</dbReference>
<dbReference type="IntAct" id="Q9DBA9">
    <property type="interactions" value="3"/>
</dbReference>
<dbReference type="STRING" id="10090.ENSMUSP00000103271"/>
<dbReference type="GlyGen" id="Q9DBA9">
    <property type="glycosylation" value="1 site"/>
</dbReference>
<dbReference type="iPTMnet" id="Q9DBA9"/>
<dbReference type="PhosphoSitePlus" id="Q9DBA9"/>
<dbReference type="PaxDb" id="10090-ENSMUSP00000006774"/>
<dbReference type="PeptideAtlas" id="Q9DBA9"/>
<dbReference type="ProteomicsDB" id="263290"/>
<dbReference type="Pumba" id="Q9DBA9"/>
<dbReference type="DNASU" id="14884"/>
<dbReference type="GeneID" id="14884"/>
<dbReference type="KEGG" id="mmu:14884"/>
<dbReference type="AGR" id="MGI:1277216"/>
<dbReference type="CTD" id="2965"/>
<dbReference type="MGI" id="MGI:1277216">
    <property type="gene designation" value="Gtf2h1"/>
</dbReference>
<dbReference type="eggNOG" id="KOG2074">
    <property type="taxonomic scope" value="Eukaryota"/>
</dbReference>
<dbReference type="InParanoid" id="Q9DBA9"/>
<dbReference type="OrthoDB" id="360521at2759"/>
<dbReference type="PhylomeDB" id="Q9DBA9"/>
<dbReference type="Reactome" id="R-MMU-112382">
    <property type="pathway name" value="Formation of RNA Pol II elongation complex"/>
</dbReference>
<dbReference type="Reactome" id="R-MMU-113418">
    <property type="pathway name" value="Formation of the Early Elongation Complex"/>
</dbReference>
<dbReference type="Reactome" id="R-MMU-5696395">
    <property type="pathway name" value="Formation of Incision Complex in GG-NER"/>
</dbReference>
<dbReference type="Reactome" id="R-MMU-5696400">
    <property type="pathway name" value="Dual Incision in GG-NER"/>
</dbReference>
<dbReference type="Reactome" id="R-MMU-674695">
    <property type="pathway name" value="RNA Polymerase II Pre-transcription Events"/>
</dbReference>
<dbReference type="Reactome" id="R-MMU-6781823">
    <property type="pathway name" value="Formation of TC-NER Pre-Incision Complex"/>
</dbReference>
<dbReference type="Reactome" id="R-MMU-6782135">
    <property type="pathway name" value="Dual incision in TC-NER"/>
</dbReference>
<dbReference type="Reactome" id="R-MMU-6782210">
    <property type="pathway name" value="Gap-filling DNA repair synthesis and ligation in TC-NER"/>
</dbReference>
<dbReference type="Reactome" id="R-MMU-6796648">
    <property type="pathway name" value="TP53 Regulates Transcription of DNA Repair Genes"/>
</dbReference>
<dbReference type="Reactome" id="R-MMU-72086">
    <property type="pathway name" value="mRNA Capping"/>
</dbReference>
<dbReference type="Reactome" id="R-MMU-73762">
    <property type="pathway name" value="RNA Polymerase I Transcription Initiation"/>
</dbReference>
<dbReference type="Reactome" id="R-MMU-73772">
    <property type="pathway name" value="RNA Polymerase I Promoter Escape"/>
</dbReference>
<dbReference type="Reactome" id="R-MMU-73776">
    <property type="pathway name" value="RNA Polymerase II Promoter Escape"/>
</dbReference>
<dbReference type="Reactome" id="R-MMU-73779">
    <property type="pathway name" value="RNA Polymerase II Transcription Pre-Initiation And Promoter Opening"/>
</dbReference>
<dbReference type="Reactome" id="R-MMU-73863">
    <property type="pathway name" value="RNA Polymerase I Transcription Termination"/>
</dbReference>
<dbReference type="Reactome" id="R-MMU-75953">
    <property type="pathway name" value="RNA Polymerase II Transcription Initiation"/>
</dbReference>
<dbReference type="Reactome" id="R-MMU-75955">
    <property type="pathway name" value="RNA Polymerase II Transcription Elongation"/>
</dbReference>
<dbReference type="Reactome" id="R-MMU-76042">
    <property type="pathway name" value="RNA Polymerase II Transcription Initiation And Promoter Clearance"/>
</dbReference>
<dbReference type="Reactome" id="R-MMU-77075">
    <property type="pathway name" value="RNA Pol II CTD phosphorylation and interaction with CE"/>
</dbReference>
<dbReference type="BioGRID-ORCS" id="14884">
    <property type="hits" value="21 hits in 113 CRISPR screens"/>
</dbReference>
<dbReference type="ChiTaRS" id="Gtf2h1">
    <property type="organism name" value="mouse"/>
</dbReference>
<dbReference type="PRO" id="PR:Q9DBA9"/>
<dbReference type="Proteomes" id="UP000000589">
    <property type="component" value="Unplaced"/>
</dbReference>
<dbReference type="RNAct" id="Q9DBA9">
    <property type="molecule type" value="protein"/>
</dbReference>
<dbReference type="GO" id="GO:0005634">
    <property type="term" value="C:nucleus"/>
    <property type="evidence" value="ECO:0000314"/>
    <property type="project" value="MGI"/>
</dbReference>
<dbReference type="GO" id="GO:0000439">
    <property type="term" value="C:transcription factor TFIIH core complex"/>
    <property type="evidence" value="ECO:0007669"/>
    <property type="project" value="InterPro"/>
</dbReference>
<dbReference type="GO" id="GO:0005675">
    <property type="term" value="C:transcription factor TFIIH holo complex"/>
    <property type="evidence" value="ECO:0000250"/>
    <property type="project" value="UniProtKB"/>
</dbReference>
<dbReference type="GO" id="GO:1990830">
    <property type="term" value="P:cellular response to leukemia inhibitory factor"/>
    <property type="evidence" value="ECO:0000270"/>
    <property type="project" value="MGI"/>
</dbReference>
<dbReference type="GO" id="GO:0006289">
    <property type="term" value="P:nucleotide-excision repair"/>
    <property type="evidence" value="ECO:0007669"/>
    <property type="project" value="InterPro"/>
</dbReference>
<dbReference type="GO" id="GO:0006366">
    <property type="term" value="P:transcription by RNA polymerase II"/>
    <property type="evidence" value="ECO:0000250"/>
    <property type="project" value="UniProtKB"/>
</dbReference>
<dbReference type="CDD" id="cd13229">
    <property type="entry name" value="PH_TFIIH"/>
    <property type="match status" value="1"/>
</dbReference>
<dbReference type="FunFam" id="2.30.29.30:FF:000115">
    <property type="entry name" value="General transcription factor IIH subunit 1"/>
    <property type="match status" value="1"/>
</dbReference>
<dbReference type="Gene3D" id="6.10.140.1200">
    <property type="match status" value="1"/>
</dbReference>
<dbReference type="Gene3D" id="1.10.3970.10">
    <property type="entry name" value="BSD domain"/>
    <property type="match status" value="1"/>
</dbReference>
<dbReference type="Gene3D" id="2.30.29.30">
    <property type="entry name" value="Pleckstrin-homology domain (PH domain)/Phosphotyrosine-binding domain (PTB)"/>
    <property type="match status" value="1"/>
</dbReference>
<dbReference type="InterPro" id="IPR005607">
    <property type="entry name" value="BSD_dom"/>
</dbReference>
<dbReference type="InterPro" id="IPR035925">
    <property type="entry name" value="BSD_dom_sf"/>
</dbReference>
<dbReference type="InterPro" id="IPR011993">
    <property type="entry name" value="PH-like_dom_sf"/>
</dbReference>
<dbReference type="InterPro" id="IPR027079">
    <property type="entry name" value="Tfb1/GTF2H1"/>
</dbReference>
<dbReference type="InterPro" id="IPR013876">
    <property type="entry name" value="TFIIH_BTF_p62_N"/>
</dbReference>
<dbReference type="PANTHER" id="PTHR12856">
    <property type="entry name" value="TRANSCRIPTION INITIATION FACTOR IIH-RELATED"/>
    <property type="match status" value="1"/>
</dbReference>
<dbReference type="Pfam" id="PF03909">
    <property type="entry name" value="BSD"/>
    <property type="match status" value="1"/>
</dbReference>
<dbReference type="Pfam" id="PF08567">
    <property type="entry name" value="PH_TFIIH"/>
    <property type="match status" value="1"/>
</dbReference>
<dbReference type="SMART" id="SM00751">
    <property type="entry name" value="BSD"/>
    <property type="match status" value="2"/>
</dbReference>
<dbReference type="SUPFAM" id="SSF140383">
    <property type="entry name" value="BSD domain-like"/>
    <property type="match status" value="2"/>
</dbReference>
<dbReference type="SUPFAM" id="SSF50729">
    <property type="entry name" value="PH domain-like"/>
    <property type="match status" value="1"/>
</dbReference>
<dbReference type="PROSITE" id="PS50858">
    <property type="entry name" value="BSD"/>
    <property type="match status" value="2"/>
</dbReference>
<organism>
    <name type="scientific">Mus musculus</name>
    <name type="common">Mouse</name>
    <dbReference type="NCBI Taxonomy" id="10090"/>
    <lineage>
        <taxon>Eukaryota</taxon>
        <taxon>Metazoa</taxon>
        <taxon>Chordata</taxon>
        <taxon>Craniata</taxon>
        <taxon>Vertebrata</taxon>
        <taxon>Euteleostomi</taxon>
        <taxon>Mammalia</taxon>
        <taxon>Eutheria</taxon>
        <taxon>Euarchontoglires</taxon>
        <taxon>Glires</taxon>
        <taxon>Rodentia</taxon>
        <taxon>Myomorpha</taxon>
        <taxon>Muroidea</taxon>
        <taxon>Muridae</taxon>
        <taxon>Murinae</taxon>
        <taxon>Mus</taxon>
        <taxon>Mus</taxon>
    </lineage>
</organism>
<keyword id="KW-0007">Acetylation</keyword>
<keyword id="KW-0227">DNA damage</keyword>
<keyword id="KW-0234">DNA repair</keyword>
<keyword id="KW-0539">Nucleus</keyword>
<keyword id="KW-0597">Phosphoprotein</keyword>
<keyword id="KW-1185">Reference proteome</keyword>
<keyword id="KW-0677">Repeat</keyword>
<keyword id="KW-0804">Transcription</keyword>
<keyword id="KW-0805">Transcription regulation</keyword>
<name>TF2H1_MOUSE</name>
<accession>Q9DBA9</accession>
<accession>O35637</accession>